<feature type="signal peptide" description="Tat-type signal" evidence="1">
    <location>
        <begin position="1"/>
        <end position="29"/>
    </location>
</feature>
<feature type="chain" id="PRO_1000213469" description="Glucans biosynthesis protein D">
    <location>
        <begin position="30"/>
        <end position="541"/>
    </location>
</feature>
<protein>
    <recommendedName>
        <fullName evidence="1">Glucans biosynthesis protein D</fullName>
    </recommendedName>
</protein>
<name>OPGD_PSEFS</name>
<sequence length="541" mass="60523">MHRRNLLKASMAIAAYTGLSASGLLAAQAWAGNRAADGKAVAFDFESLKAQAKQLAGTAYKDTRQVLPPTLATMTPQNFNAIGYDGNHSLWKELNGQLDVQFFHVGMGFKTPVRMHSVDPKTREAREVHFRPSLFNYEKTTVDTKQLTGDLGFSGFKLFKAPELDRHDVLSFLGASYFRAVDSTGQYGLSARGLAIDTYAKKREEFPDFTQFWFETPDKNATRFVVYALLDSPSATGAYRFDIDCQANQVVMAIDAHINARTTIEQLGIAPMTSMFSCGTHERRMCDTIHPQIHDSDRLAMWRGNGEWICRPLNNPAKLQFNAFADTDPKGFGLVQTDHEFASYQDTVDWYSKRPSLWVEPTTAWGEGSIDLLEIPTTGETLDNIVAFWTPKKPVAAGDSLNYGYKLYWSALPPVSTPLAQVDATRSGMGGFTEGWAPGEHYPEVWARRFAVDFKGGGLDRLPAGTGIEPVVTCSHGEVKDFSVLVLDNIKGYRILFDWYPTSDSVEPVELRLFIRTQDRTLSETWLYQYFPPAPEARKYT</sequence>
<gene>
    <name evidence="1" type="primary">opgD</name>
    <name type="ordered locus">PFLU_1207</name>
</gene>
<proteinExistence type="inferred from homology"/>
<reference key="1">
    <citation type="journal article" date="2009" name="Genome Biol.">
        <title>Genomic and genetic analyses of diversity and plant interactions of Pseudomonas fluorescens.</title>
        <authorList>
            <person name="Silby M.W."/>
            <person name="Cerdeno-Tarraga A.M."/>
            <person name="Vernikos G.S."/>
            <person name="Giddens S.R."/>
            <person name="Jackson R.W."/>
            <person name="Preston G.M."/>
            <person name="Zhang X.-X."/>
            <person name="Moon C.D."/>
            <person name="Gehrig S.M."/>
            <person name="Godfrey S.A.C."/>
            <person name="Knight C.G."/>
            <person name="Malone J.G."/>
            <person name="Robinson Z."/>
            <person name="Spiers A.J."/>
            <person name="Harris S."/>
            <person name="Challis G.L."/>
            <person name="Yaxley A.M."/>
            <person name="Harris D."/>
            <person name="Seeger K."/>
            <person name="Murphy L."/>
            <person name="Rutter S."/>
            <person name="Squares R."/>
            <person name="Quail M.A."/>
            <person name="Saunders E."/>
            <person name="Mavromatis K."/>
            <person name="Brettin T.S."/>
            <person name="Bentley S.D."/>
            <person name="Hothersall J."/>
            <person name="Stephens E."/>
            <person name="Thomas C.M."/>
            <person name="Parkhill J."/>
            <person name="Levy S.B."/>
            <person name="Rainey P.B."/>
            <person name="Thomson N.R."/>
        </authorList>
    </citation>
    <scope>NUCLEOTIDE SEQUENCE [LARGE SCALE GENOMIC DNA]</scope>
    <source>
        <strain>SBW25</strain>
    </source>
</reference>
<accession>C3KDR8</accession>
<dbReference type="EMBL" id="AM181176">
    <property type="protein sequence ID" value="CAY47467.1"/>
    <property type="molecule type" value="Genomic_DNA"/>
</dbReference>
<dbReference type="RefSeq" id="WP_012722537.1">
    <property type="nucleotide sequence ID" value="NC_012660.1"/>
</dbReference>
<dbReference type="SMR" id="C3KDR8"/>
<dbReference type="STRING" id="294.SRM1_01092"/>
<dbReference type="eggNOG" id="COG3131">
    <property type="taxonomic scope" value="Bacteria"/>
</dbReference>
<dbReference type="HOGENOM" id="CLU_023403_2_0_6"/>
<dbReference type="OrthoDB" id="335750at2"/>
<dbReference type="UniPathway" id="UPA00637"/>
<dbReference type="GO" id="GO:0030288">
    <property type="term" value="C:outer membrane-bounded periplasmic space"/>
    <property type="evidence" value="ECO:0007669"/>
    <property type="project" value="TreeGrafter"/>
</dbReference>
<dbReference type="GO" id="GO:0030246">
    <property type="term" value="F:carbohydrate binding"/>
    <property type="evidence" value="ECO:0007669"/>
    <property type="project" value="InterPro"/>
</dbReference>
<dbReference type="GO" id="GO:0003824">
    <property type="term" value="F:catalytic activity"/>
    <property type="evidence" value="ECO:0007669"/>
    <property type="project" value="InterPro"/>
</dbReference>
<dbReference type="GO" id="GO:0051274">
    <property type="term" value="P:beta-glucan biosynthetic process"/>
    <property type="evidence" value="ECO:0007669"/>
    <property type="project" value="TreeGrafter"/>
</dbReference>
<dbReference type="Gene3D" id="2.70.98.10">
    <property type="match status" value="1"/>
</dbReference>
<dbReference type="Gene3D" id="2.60.40.10">
    <property type="entry name" value="Immunoglobulins"/>
    <property type="match status" value="1"/>
</dbReference>
<dbReference type="HAMAP" id="MF_01068">
    <property type="entry name" value="MdoD_OpgD"/>
    <property type="match status" value="1"/>
</dbReference>
<dbReference type="InterPro" id="IPR011013">
    <property type="entry name" value="Gal_mutarotase_sf_dom"/>
</dbReference>
<dbReference type="InterPro" id="IPR014718">
    <property type="entry name" value="GH-type_carb-bd"/>
</dbReference>
<dbReference type="InterPro" id="IPR023724">
    <property type="entry name" value="Glucan_biosyn_MdoD"/>
</dbReference>
<dbReference type="InterPro" id="IPR014438">
    <property type="entry name" value="Glucan_biosyn_MdoG/MdoD"/>
</dbReference>
<dbReference type="InterPro" id="IPR007444">
    <property type="entry name" value="Glucan_biosyn_MdoG_C"/>
</dbReference>
<dbReference type="InterPro" id="IPR013783">
    <property type="entry name" value="Ig-like_fold"/>
</dbReference>
<dbReference type="InterPro" id="IPR014756">
    <property type="entry name" value="Ig_E-set"/>
</dbReference>
<dbReference type="InterPro" id="IPR006311">
    <property type="entry name" value="TAT_signal"/>
</dbReference>
<dbReference type="PANTHER" id="PTHR30504">
    <property type="entry name" value="GLUCANS BIOSYNTHESIS PROTEIN"/>
    <property type="match status" value="1"/>
</dbReference>
<dbReference type="PANTHER" id="PTHR30504:SF3">
    <property type="entry name" value="GLUCANS BIOSYNTHESIS PROTEIN D"/>
    <property type="match status" value="1"/>
</dbReference>
<dbReference type="Pfam" id="PF04349">
    <property type="entry name" value="MdoG"/>
    <property type="match status" value="1"/>
</dbReference>
<dbReference type="PIRSF" id="PIRSF006281">
    <property type="entry name" value="MdoG"/>
    <property type="match status" value="1"/>
</dbReference>
<dbReference type="SUPFAM" id="SSF81296">
    <property type="entry name" value="E set domains"/>
    <property type="match status" value="1"/>
</dbReference>
<dbReference type="SUPFAM" id="SSF74650">
    <property type="entry name" value="Galactose mutarotase-like"/>
    <property type="match status" value="1"/>
</dbReference>
<dbReference type="PROSITE" id="PS51318">
    <property type="entry name" value="TAT"/>
    <property type="match status" value="1"/>
</dbReference>
<comment type="function">
    <text evidence="1">Probably involved in the control of the structural glucose backbone of osmoregulated periplasmic glucans (OPGs).</text>
</comment>
<comment type="pathway">
    <text evidence="1">Glycan metabolism; osmoregulated periplasmic glucan (OPG) biosynthesis.</text>
</comment>
<comment type="subcellular location">
    <subcellularLocation>
        <location evidence="1">Periplasm</location>
    </subcellularLocation>
</comment>
<comment type="PTM">
    <text>Predicted to be exported by the Tat system. The position of the signal peptide cleavage has not been experimentally proven.</text>
</comment>
<comment type="similarity">
    <text evidence="1">Belongs to the OpgD/OpgG family.</text>
</comment>
<keyword id="KW-0574">Periplasm</keyword>
<keyword id="KW-0732">Signal</keyword>
<organism>
    <name type="scientific">Pseudomonas fluorescens (strain SBW25)</name>
    <dbReference type="NCBI Taxonomy" id="216595"/>
    <lineage>
        <taxon>Bacteria</taxon>
        <taxon>Pseudomonadati</taxon>
        <taxon>Pseudomonadota</taxon>
        <taxon>Gammaproteobacteria</taxon>
        <taxon>Pseudomonadales</taxon>
        <taxon>Pseudomonadaceae</taxon>
        <taxon>Pseudomonas</taxon>
    </lineage>
</organism>
<evidence type="ECO:0000255" key="1">
    <source>
        <dbReference type="HAMAP-Rule" id="MF_01068"/>
    </source>
</evidence>